<evidence type="ECO:0000255" key="1">
    <source>
        <dbReference type="HAMAP-Rule" id="MF_00503"/>
    </source>
</evidence>
<evidence type="ECO:0000256" key="2">
    <source>
        <dbReference type="SAM" id="MobiDB-lite"/>
    </source>
</evidence>
<evidence type="ECO:0000305" key="3"/>
<sequence>MDVILLERISKLGQMGETVKVRDGFARNYLLPLGKALRANAANKTRFEAERATLEARNLERKSEAQKVADVLDGKSFIVVRSAGETGQLYGSVAARDVVEILAAEGFNIGRNQVHLNTPIKAIGLHKVELQLHAEVEIHVELNVARSAEEAERQSKGEELTSVDAIYGVDEDALRPEDFFDPEADGVDEDEA</sequence>
<accession>B5ZWC6</accession>
<feature type="chain" id="PRO_1000126960" description="Large ribosomal subunit protein bL9">
    <location>
        <begin position="1"/>
        <end position="192"/>
    </location>
</feature>
<feature type="region of interest" description="Disordered" evidence="2">
    <location>
        <begin position="172"/>
        <end position="192"/>
    </location>
</feature>
<feature type="compositionally biased region" description="Acidic residues" evidence="2">
    <location>
        <begin position="179"/>
        <end position="192"/>
    </location>
</feature>
<name>RL9_RHILW</name>
<protein>
    <recommendedName>
        <fullName evidence="1">Large ribosomal subunit protein bL9</fullName>
    </recommendedName>
    <alternativeName>
        <fullName evidence="3">50S ribosomal protein L9</fullName>
    </alternativeName>
</protein>
<comment type="function">
    <text evidence="1">Binds to the 23S rRNA.</text>
</comment>
<comment type="similarity">
    <text evidence="1">Belongs to the bacterial ribosomal protein bL9 family.</text>
</comment>
<organism>
    <name type="scientific">Rhizobium leguminosarum bv. trifolii (strain WSM2304)</name>
    <dbReference type="NCBI Taxonomy" id="395492"/>
    <lineage>
        <taxon>Bacteria</taxon>
        <taxon>Pseudomonadati</taxon>
        <taxon>Pseudomonadota</taxon>
        <taxon>Alphaproteobacteria</taxon>
        <taxon>Hyphomicrobiales</taxon>
        <taxon>Rhizobiaceae</taxon>
        <taxon>Rhizobium/Agrobacterium group</taxon>
        <taxon>Rhizobium</taxon>
    </lineage>
</organism>
<proteinExistence type="inferred from homology"/>
<reference key="1">
    <citation type="journal article" date="2010" name="Stand. Genomic Sci.">
        <title>Complete genome sequence of Rhizobium leguminosarum bv trifolii strain WSM2304, an effective microsymbiont of the South American clover Trifolium polymorphum.</title>
        <authorList>
            <person name="Reeve W."/>
            <person name="O'Hara G."/>
            <person name="Chain P."/>
            <person name="Ardley J."/>
            <person name="Brau L."/>
            <person name="Nandesena K."/>
            <person name="Tiwari R."/>
            <person name="Malfatti S."/>
            <person name="Kiss H."/>
            <person name="Lapidus A."/>
            <person name="Copeland A."/>
            <person name="Nolan M."/>
            <person name="Land M."/>
            <person name="Ivanova N."/>
            <person name="Mavromatis K."/>
            <person name="Markowitz V."/>
            <person name="Kyrpides N."/>
            <person name="Melino V."/>
            <person name="Denton M."/>
            <person name="Yates R."/>
            <person name="Howieson J."/>
        </authorList>
    </citation>
    <scope>NUCLEOTIDE SEQUENCE [LARGE SCALE GENOMIC DNA]</scope>
    <source>
        <strain>WSM2304</strain>
    </source>
</reference>
<dbReference type="EMBL" id="CP001191">
    <property type="protein sequence ID" value="ACI54345.1"/>
    <property type="molecule type" value="Genomic_DNA"/>
</dbReference>
<dbReference type="RefSeq" id="WP_003587512.1">
    <property type="nucleotide sequence ID" value="NC_011369.1"/>
</dbReference>
<dbReference type="SMR" id="B5ZWC6"/>
<dbReference type="STRING" id="395492.Rleg2_1051"/>
<dbReference type="KEGG" id="rlt:Rleg2_1051"/>
<dbReference type="eggNOG" id="COG0359">
    <property type="taxonomic scope" value="Bacteria"/>
</dbReference>
<dbReference type="HOGENOM" id="CLU_078938_1_0_5"/>
<dbReference type="Proteomes" id="UP000008330">
    <property type="component" value="Chromosome"/>
</dbReference>
<dbReference type="GO" id="GO:1990904">
    <property type="term" value="C:ribonucleoprotein complex"/>
    <property type="evidence" value="ECO:0007669"/>
    <property type="project" value="UniProtKB-KW"/>
</dbReference>
<dbReference type="GO" id="GO:0005840">
    <property type="term" value="C:ribosome"/>
    <property type="evidence" value="ECO:0007669"/>
    <property type="project" value="UniProtKB-KW"/>
</dbReference>
<dbReference type="GO" id="GO:0019843">
    <property type="term" value="F:rRNA binding"/>
    <property type="evidence" value="ECO:0007669"/>
    <property type="project" value="UniProtKB-UniRule"/>
</dbReference>
<dbReference type="GO" id="GO:0003735">
    <property type="term" value="F:structural constituent of ribosome"/>
    <property type="evidence" value="ECO:0007669"/>
    <property type="project" value="InterPro"/>
</dbReference>
<dbReference type="GO" id="GO:0006412">
    <property type="term" value="P:translation"/>
    <property type="evidence" value="ECO:0007669"/>
    <property type="project" value="UniProtKB-UniRule"/>
</dbReference>
<dbReference type="Gene3D" id="3.10.430.100">
    <property type="entry name" value="Ribosomal protein L9, C-terminal domain"/>
    <property type="match status" value="1"/>
</dbReference>
<dbReference type="Gene3D" id="3.40.5.10">
    <property type="entry name" value="Ribosomal protein L9, N-terminal domain"/>
    <property type="match status" value="1"/>
</dbReference>
<dbReference type="HAMAP" id="MF_00503">
    <property type="entry name" value="Ribosomal_bL9"/>
    <property type="match status" value="1"/>
</dbReference>
<dbReference type="InterPro" id="IPR000244">
    <property type="entry name" value="Ribosomal_bL9"/>
</dbReference>
<dbReference type="InterPro" id="IPR009027">
    <property type="entry name" value="Ribosomal_bL9/RNase_H1_N"/>
</dbReference>
<dbReference type="InterPro" id="IPR020594">
    <property type="entry name" value="Ribosomal_bL9_bac/chp"/>
</dbReference>
<dbReference type="InterPro" id="IPR020069">
    <property type="entry name" value="Ribosomal_bL9_C"/>
</dbReference>
<dbReference type="InterPro" id="IPR036791">
    <property type="entry name" value="Ribosomal_bL9_C_sf"/>
</dbReference>
<dbReference type="InterPro" id="IPR020070">
    <property type="entry name" value="Ribosomal_bL9_N"/>
</dbReference>
<dbReference type="InterPro" id="IPR036935">
    <property type="entry name" value="Ribosomal_bL9_N_sf"/>
</dbReference>
<dbReference type="NCBIfam" id="TIGR00158">
    <property type="entry name" value="L9"/>
    <property type="match status" value="1"/>
</dbReference>
<dbReference type="PANTHER" id="PTHR21368">
    <property type="entry name" value="50S RIBOSOMAL PROTEIN L9"/>
    <property type="match status" value="1"/>
</dbReference>
<dbReference type="Pfam" id="PF03948">
    <property type="entry name" value="Ribosomal_L9_C"/>
    <property type="match status" value="1"/>
</dbReference>
<dbReference type="Pfam" id="PF01281">
    <property type="entry name" value="Ribosomal_L9_N"/>
    <property type="match status" value="1"/>
</dbReference>
<dbReference type="SUPFAM" id="SSF55658">
    <property type="entry name" value="L9 N-domain-like"/>
    <property type="match status" value="1"/>
</dbReference>
<dbReference type="SUPFAM" id="SSF55653">
    <property type="entry name" value="Ribosomal protein L9 C-domain"/>
    <property type="match status" value="1"/>
</dbReference>
<dbReference type="PROSITE" id="PS00651">
    <property type="entry name" value="RIBOSOMAL_L9"/>
    <property type="match status" value="1"/>
</dbReference>
<gene>
    <name evidence="1" type="primary">rplI</name>
    <name type="ordered locus">Rleg2_1051</name>
</gene>
<keyword id="KW-1185">Reference proteome</keyword>
<keyword id="KW-0687">Ribonucleoprotein</keyword>
<keyword id="KW-0689">Ribosomal protein</keyword>
<keyword id="KW-0694">RNA-binding</keyword>
<keyword id="KW-0699">rRNA-binding</keyword>